<name>TIG_BUCAT</name>
<dbReference type="EC" id="5.2.1.8" evidence="1"/>
<dbReference type="EMBL" id="CP001158">
    <property type="protein sequence ID" value="ACL30268.1"/>
    <property type="molecule type" value="Genomic_DNA"/>
</dbReference>
<dbReference type="RefSeq" id="WP_012619564.1">
    <property type="nucleotide sequence ID" value="NC_011834.1"/>
</dbReference>
<dbReference type="SMR" id="B8D803"/>
<dbReference type="KEGG" id="bau:BUAPTUC7_468"/>
<dbReference type="HOGENOM" id="CLU_033058_2_0_6"/>
<dbReference type="GO" id="GO:0005737">
    <property type="term" value="C:cytoplasm"/>
    <property type="evidence" value="ECO:0007669"/>
    <property type="project" value="UniProtKB-SubCell"/>
</dbReference>
<dbReference type="GO" id="GO:0003755">
    <property type="term" value="F:peptidyl-prolyl cis-trans isomerase activity"/>
    <property type="evidence" value="ECO:0007669"/>
    <property type="project" value="UniProtKB-UniRule"/>
</dbReference>
<dbReference type="GO" id="GO:0051301">
    <property type="term" value="P:cell division"/>
    <property type="evidence" value="ECO:0007669"/>
    <property type="project" value="UniProtKB-KW"/>
</dbReference>
<dbReference type="GO" id="GO:0006457">
    <property type="term" value="P:protein folding"/>
    <property type="evidence" value="ECO:0007669"/>
    <property type="project" value="UniProtKB-UniRule"/>
</dbReference>
<dbReference type="GO" id="GO:0015031">
    <property type="term" value="P:protein transport"/>
    <property type="evidence" value="ECO:0007669"/>
    <property type="project" value="UniProtKB-UniRule"/>
</dbReference>
<dbReference type="Gene3D" id="3.10.50.40">
    <property type="match status" value="1"/>
</dbReference>
<dbReference type="Gene3D" id="3.30.70.1050">
    <property type="entry name" value="Trigger factor ribosome-binding domain"/>
    <property type="match status" value="1"/>
</dbReference>
<dbReference type="Gene3D" id="1.10.3120.10">
    <property type="entry name" value="Trigger factor, C-terminal domain"/>
    <property type="match status" value="1"/>
</dbReference>
<dbReference type="HAMAP" id="MF_00303">
    <property type="entry name" value="Trigger_factor_Tig"/>
    <property type="match status" value="1"/>
</dbReference>
<dbReference type="InterPro" id="IPR046357">
    <property type="entry name" value="PPIase_dom_sf"/>
</dbReference>
<dbReference type="InterPro" id="IPR005215">
    <property type="entry name" value="Trig_fac"/>
</dbReference>
<dbReference type="InterPro" id="IPR008880">
    <property type="entry name" value="Trigger_fac_C"/>
</dbReference>
<dbReference type="InterPro" id="IPR037041">
    <property type="entry name" value="Trigger_fac_C_sf"/>
</dbReference>
<dbReference type="InterPro" id="IPR008881">
    <property type="entry name" value="Trigger_fac_ribosome-bd_bac"/>
</dbReference>
<dbReference type="InterPro" id="IPR036611">
    <property type="entry name" value="Trigger_fac_ribosome-bd_sf"/>
</dbReference>
<dbReference type="InterPro" id="IPR027304">
    <property type="entry name" value="Trigger_fact/SurA_dom_sf"/>
</dbReference>
<dbReference type="NCBIfam" id="TIGR00115">
    <property type="entry name" value="tig"/>
    <property type="match status" value="1"/>
</dbReference>
<dbReference type="Pfam" id="PF05698">
    <property type="entry name" value="Trigger_C"/>
    <property type="match status" value="1"/>
</dbReference>
<dbReference type="Pfam" id="PF05697">
    <property type="entry name" value="Trigger_N"/>
    <property type="match status" value="1"/>
</dbReference>
<dbReference type="PIRSF" id="PIRSF003095">
    <property type="entry name" value="Trigger_factor"/>
    <property type="match status" value="1"/>
</dbReference>
<dbReference type="SUPFAM" id="SSF54534">
    <property type="entry name" value="FKBP-like"/>
    <property type="match status" value="1"/>
</dbReference>
<dbReference type="SUPFAM" id="SSF109998">
    <property type="entry name" value="Triger factor/SurA peptide-binding domain-like"/>
    <property type="match status" value="1"/>
</dbReference>
<dbReference type="SUPFAM" id="SSF102735">
    <property type="entry name" value="Trigger factor ribosome-binding domain"/>
    <property type="match status" value="1"/>
</dbReference>
<protein>
    <recommendedName>
        <fullName evidence="1">Trigger factor</fullName>
        <shortName evidence="1">TF</shortName>
        <ecNumber evidence="1">5.2.1.8</ecNumber>
    </recommendedName>
    <alternativeName>
        <fullName evidence="1">PPIase</fullName>
    </alternativeName>
</protein>
<feature type="chain" id="PRO_1000198148" description="Trigger factor">
    <location>
        <begin position="1"/>
        <end position="442"/>
    </location>
</feature>
<feature type="domain" description="PPIase FKBP-type" evidence="1">
    <location>
        <begin position="163"/>
        <end position="248"/>
    </location>
</feature>
<organism>
    <name type="scientific">Buchnera aphidicola subsp. Acyrthosiphon pisum (strain Tuc7)</name>
    <dbReference type="NCBI Taxonomy" id="561501"/>
    <lineage>
        <taxon>Bacteria</taxon>
        <taxon>Pseudomonadati</taxon>
        <taxon>Pseudomonadota</taxon>
        <taxon>Gammaproteobacteria</taxon>
        <taxon>Enterobacterales</taxon>
        <taxon>Erwiniaceae</taxon>
        <taxon>Buchnera</taxon>
    </lineage>
</organism>
<evidence type="ECO:0000255" key="1">
    <source>
        <dbReference type="HAMAP-Rule" id="MF_00303"/>
    </source>
</evidence>
<proteinExistence type="inferred from homology"/>
<accession>B8D803</accession>
<reference key="1">
    <citation type="journal article" date="2009" name="Science">
        <title>The dynamics and time scale of ongoing genomic erosion in symbiotic bacteria.</title>
        <authorList>
            <person name="Moran N.A."/>
            <person name="McLaughlin H.J."/>
            <person name="Sorek R."/>
        </authorList>
    </citation>
    <scope>NUCLEOTIDE SEQUENCE [LARGE SCALE GENOMIC DNA]</scope>
    <source>
        <strain>Tuc7</strain>
    </source>
</reference>
<sequence length="442" mass="53529">MNFFMEKNKDAGHRVTIKIPKTTVNNSLFQEFIKIRKTTKINGFRKGKTPIRVIQEKYGSAIYYDIFKKLMQKFFYEFLKTEKIKIIGSPKFYIHQDEDKKKEYFEYSVIYELYPQFQIKDIKQIKVNKINVEITEEDIKKNIETNKNKKNIWNPVNKAVKSYDRVTINYCIYEKNKKIKKFDKDNISFIVSKNTLIPQLNYKIINHFVNDIIFFKIKFHAFHPEKELQNKDITFKIKIIKIEKKQELESEKSNKKNITEKKTIQTDYQTIKNNLHSQINIITDKYLENQIIQKIVEKNILLLPPLLFQKEIKNLYKQYTKQYQEENSNILEKKYHMSLDSEVKKRLYFQIIIEQIILNNKLFADENNIQKLIKKISSNYKNPMEIIKLYNKNKNLKNTMKNIELERQAMLLLKKSIKIEKQNWNFERFLNYNWASHEELMV</sequence>
<gene>
    <name evidence="1" type="primary">tig</name>
    <name type="ordered locus">BUAPTUC7_468</name>
</gene>
<comment type="function">
    <text evidence="1">Involved in protein export. Acts as a chaperone by maintaining the newly synthesized protein in an open conformation. Functions as a peptidyl-prolyl cis-trans isomerase.</text>
</comment>
<comment type="catalytic activity">
    <reaction evidence="1">
        <text>[protein]-peptidylproline (omega=180) = [protein]-peptidylproline (omega=0)</text>
        <dbReference type="Rhea" id="RHEA:16237"/>
        <dbReference type="Rhea" id="RHEA-COMP:10747"/>
        <dbReference type="Rhea" id="RHEA-COMP:10748"/>
        <dbReference type="ChEBI" id="CHEBI:83833"/>
        <dbReference type="ChEBI" id="CHEBI:83834"/>
        <dbReference type="EC" id="5.2.1.8"/>
    </reaction>
</comment>
<comment type="subcellular location">
    <subcellularLocation>
        <location>Cytoplasm</location>
    </subcellularLocation>
    <text evidence="1">About half TF is bound to the ribosome near the polypeptide exit tunnel while the other half is free in the cytoplasm.</text>
</comment>
<comment type="domain">
    <text evidence="1">Consists of 3 domains; the N-terminus binds the ribosome, the middle domain has PPIase activity, while the C-terminus has intrinsic chaperone activity on its own.</text>
</comment>
<comment type="similarity">
    <text evidence="1">Belongs to the FKBP-type PPIase family. Tig subfamily.</text>
</comment>
<keyword id="KW-0131">Cell cycle</keyword>
<keyword id="KW-0132">Cell division</keyword>
<keyword id="KW-0143">Chaperone</keyword>
<keyword id="KW-0963">Cytoplasm</keyword>
<keyword id="KW-0413">Isomerase</keyword>
<keyword id="KW-0697">Rotamase</keyword>